<protein>
    <recommendedName>
        <fullName evidence="1">Flagellar L-ring protein</fullName>
    </recommendedName>
    <alternativeName>
        <fullName evidence="1">Basal body L-ring protein</fullName>
    </alternativeName>
</protein>
<evidence type="ECO:0000255" key="1">
    <source>
        <dbReference type="HAMAP-Rule" id="MF_00415"/>
    </source>
</evidence>
<feature type="signal peptide" evidence="1">
    <location>
        <begin position="1"/>
        <end position="15"/>
    </location>
</feature>
<feature type="chain" id="PRO_1000134832" description="Flagellar L-ring protein">
    <location>
        <begin position="16"/>
        <end position="224"/>
    </location>
</feature>
<feature type="lipid moiety-binding region" description="N-palmitoyl cysteine" evidence="1">
    <location>
        <position position="16"/>
    </location>
</feature>
<feature type="lipid moiety-binding region" description="S-diacylglycerol cysteine" evidence="1">
    <location>
        <position position="16"/>
    </location>
</feature>
<organism>
    <name type="scientific">Shewanella baltica (strain OS223)</name>
    <dbReference type="NCBI Taxonomy" id="407976"/>
    <lineage>
        <taxon>Bacteria</taxon>
        <taxon>Pseudomonadati</taxon>
        <taxon>Pseudomonadota</taxon>
        <taxon>Gammaproteobacteria</taxon>
        <taxon>Alteromonadales</taxon>
        <taxon>Shewanellaceae</taxon>
        <taxon>Shewanella</taxon>
    </lineage>
</organism>
<reference key="1">
    <citation type="submission" date="2008-12" db="EMBL/GenBank/DDBJ databases">
        <title>Complete sequence of chromosome of Shewanella baltica OS223.</title>
        <authorList>
            <consortium name="US DOE Joint Genome Institute"/>
            <person name="Lucas S."/>
            <person name="Copeland A."/>
            <person name="Lapidus A."/>
            <person name="Glavina del Rio T."/>
            <person name="Dalin E."/>
            <person name="Tice H."/>
            <person name="Bruce D."/>
            <person name="Goodwin L."/>
            <person name="Pitluck S."/>
            <person name="Chertkov O."/>
            <person name="Meincke L."/>
            <person name="Brettin T."/>
            <person name="Detter J.C."/>
            <person name="Han C."/>
            <person name="Kuske C.R."/>
            <person name="Larimer F."/>
            <person name="Land M."/>
            <person name="Hauser L."/>
            <person name="Kyrpides N."/>
            <person name="Ovchinnikova G."/>
            <person name="Brettar I."/>
            <person name="Rodrigues J."/>
            <person name="Konstantinidis K."/>
            <person name="Tiedje J."/>
        </authorList>
    </citation>
    <scope>NUCLEOTIDE SEQUENCE [LARGE SCALE GENOMIC DNA]</scope>
    <source>
        <strain>OS223</strain>
    </source>
</reference>
<proteinExistence type="inferred from homology"/>
<comment type="function">
    <text evidence="1">Assembles around the rod to form the L-ring and probably protects the motor/basal body from shearing forces during rotation.</text>
</comment>
<comment type="subunit">
    <text evidence="1">The basal body constitutes a major portion of the flagellar organelle and consists of four rings (L,P,S, and M) mounted on a central rod.</text>
</comment>
<comment type="subcellular location">
    <subcellularLocation>
        <location evidence="1">Cell outer membrane</location>
        <topology evidence="1">Lipid-anchor</topology>
    </subcellularLocation>
    <subcellularLocation>
        <location evidence="1">Bacterial flagellum basal body</location>
    </subcellularLocation>
</comment>
<comment type="similarity">
    <text evidence="1">Belongs to the FlgH family.</text>
</comment>
<keyword id="KW-0975">Bacterial flagellum</keyword>
<keyword id="KW-0998">Cell outer membrane</keyword>
<keyword id="KW-0449">Lipoprotein</keyword>
<keyword id="KW-0472">Membrane</keyword>
<keyword id="KW-0564">Palmitate</keyword>
<keyword id="KW-0732">Signal</keyword>
<accession>B8E9X5</accession>
<sequence>MARYLVLAVALLLAACSSTQKKPLADDPFYAPVYPEAPPTKIAATGSIYQDSQASSLYSDIRAHKVGDIITIVLKESTQAKKSAGNQIKKGSDMSLDPIFAGGSNVSIGGVPIDLRYKDSMNTKRESDADQSNSLDGSISANVMQVLNNGSLVIRGEKWISINNGDEFIRVTGLVRSQDIKPDNTIDSTRMANARIQYSGTGTFADAQKVGWLSQFFMSDWWPF</sequence>
<gene>
    <name evidence="1" type="primary">flgH</name>
    <name type="ordered locus">Sbal223_1422</name>
</gene>
<name>FLGH_SHEB2</name>
<dbReference type="EMBL" id="CP001252">
    <property type="protein sequence ID" value="ACK45929.1"/>
    <property type="molecule type" value="Genomic_DNA"/>
</dbReference>
<dbReference type="RefSeq" id="WP_006082421.1">
    <property type="nucleotide sequence ID" value="NC_011663.1"/>
</dbReference>
<dbReference type="SMR" id="B8E9X5"/>
<dbReference type="GeneID" id="11773155"/>
<dbReference type="KEGG" id="sbp:Sbal223_1422"/>
<dbReference type="HOGENOM" id="CLU_069313_0_2_6"/>
<dbReference type="Proteomes" id="UP000002507">
    <property type="component" value="Chromosome"/>
</dbReference>
<dbReference type="GO" id="GO:0009427">
    <property type="term" value="C:bacterial-type flagellum basal body, distal rod, L ring"/>
    <property type="evidence" value="ECO:0007669"/>
    <property type="project" value="InterPro"/>
</dbReference>
<dbReference type="GO" id="GO:0009279">
    <property type="term" value="C:cell outer membrane"/>
    <property type="evidence" value="ECO:0007669"/>
    <property type="project" value="UniProtKB-SubCell"/>
</dbReference>
<dbReference type="GO" id="GO:0003774">
    <property type="term" value="F:cytoskeletal motor activity"/>
    <property type="evidence" value="ECO:0007669"/>
    <property type="project" value="InterPro"/>
</dbReference>
<dbReference type="GO" id="GO:0071973">
    <property type="term" value="P:bacterial-type flagellum-dependent cell motility"/>
    <property type="evidence" value="ECO:0007669"/>
    <property type="project" value="InterPro"/>
</dbReference>
<dbReference type="HAMAP" id="MF_00415">
    <property type="entry name" value="FlgH"/>
    <property type="match status" value="1"/>
</dbReference>
<dbReference type="InterPro" id="IPR000527">
    <property type="entry name" value="Flag_Lring"/>
</dbReference>
<dbReference type="NCBIfam" id="NF001304">
    <property type="entry name" value="PRK00249.1-4"/>
    <property type="match status" value="1"/>
</dbReference>
<dbReference type="NCBIfam" id="NF009338">
    <property type="entry name" value="PRK12698.1"/>
    <property type="match status" value="1"/>
</dbReference>
<dbReference type="PANTHER" id="PTHR34933">
    <property type="entry name" value="FLAGELLAR L-RING PROTEIN"/>
    <property type="match status" value="1"/>
</dbReference>
<dbReference type="PANTHER" id="PTHR34933:SF1">
    <property type="entry name" value="FLAGELLAR L-RING PROTEIN"/>
    <property type="match status" value="1"/>
</dbReference>
<dbReference type="Pfam" id="PF02107">
    <property type="entry name" value="FlgH"/>
    <property type="match status" value="1"/>
</dbReference>
<dbReference type="PRINTS" id="PR01008">
    <property type="entry name" value="FLGLRINGFLGH"/>
</dbReference>
<dbReference type="PROSITE" id="PS51257">
    <property type="entry name" value="PROKAR_LIPOPROTEIN"/>
    <property type="match status" value="1"/>
</dbReference>